<reference key="1">
    <citation type="journal article" date="2006" name="J. Bacteriol.">
        <title>Genome sequence of Aeromonas hydrophila ATCC 7966T: jack of all trades.</title>
        <authorList>
            <person name="Seshadri R."/>
            <person name="Joseph S.W."/>
            <person name="Chopra A.K."/>
            <person name="Sha J."/>
            <person name="Shaw J."/>
            <person name="Graf J."/>
            <person name="Haft D.H."/>
            <person name="Wu M."/>
            <person name="Ren Q."/>
            <person name="Rosovitz M.J."/>
            <person name="Madupu R."/>
            <person name="Tallon L."/>
            <person name="Kim M."/>
            <person name="Jin S."/>
            <person name="Vuong H."/>
            <person name="Stine O.C."/>
            <person name="Ali A."/>
            <person name="Horneman A.J."/>
            <person name="Heidelberg J.F."/>
        </authorList>
    </citation>
    <scope>NUCLEOTIDE SEQUENCE [LARGE SCALE GENOMIC DNA]</scope>
    <source>
        <strain>ATCC 7966 / DSM 30187 / BCRC 13018 / CCUG 14551 / JCM 1027 / KCTC 2358 / NCIMB 9240 / NCTC 8049</strain>
    </source>
</reference>
<organism>
    <name type="scientific">Aeromonas hydrophila subsp. hydrophila (strain ATCC 7966 / DSM 30187 / BCRC 13018 / CCUG 14551 / JCM 1027 / KCTC 2358 / NCIMB 9240 / NCTC 8049)</name>
    <dbReference type="NCBI Taxonomy" id="380703"/>
    <lineage>
        <taxon>Bacteria</taxon>
        <taxon>Pseudomonadati</taxon>
        <taxon>Pseudomonadota</taxon>
        <taxon>Gammaproteobacteria</taxon>
        <taxon>Aeromonadales</taxon>
        <taxon>Aeromonadaceae</taxon>
        <taxon>Aeromonas</taxon>
    </lineage>
</organism>
<protein>
    <recommendedName>
        <fullName evidence="1">GTP cyclohydrolase-2</fullName>
        <ecNumber evidence="1">3.5.4.25</ecNumber>
    </recommendedName>
    <alternativeName>
        <fullName evidence="1">GTP cyclohydrolase II</fullName>
    </alternativeName>
</protein>
<keyword id="KW-0342">GTP-binding</keyword>
<keyword id="KW-0378">Hydrolase</keyword>
<keyword id="KW-0479">Metal-binding</keyword>
<keyword id="KW-0547">Nucleotide-binding</keyword>
<keyword id="KW-1185">Reference proteome</keyword>
<keyword id="KW-0686">Riboflavin biosynthesis</keyword>
<keyword id="KW-0862">Zinc</keyword>
<proteinExistence type="inferred from homology"/>
<evidence type="ECO:0000255" key="1">
    <source>
        <dbReference type="HAMAP-Rule" id="MF_00179"/>
    </source>
</evidence>
<dbReference type="EC" id="3.5.4.25" evidence="1"/>
<dbReference type="EMBL" id="CP000462">
    <property type="protein sequence ID" value="ABK36951.1"/>
    <property type="molecule type" value="Genomic_DNA"/>
</dbReference>
<dbReference type="RefSeq" id="WP_010634253.1">
    <property type="nucleotide sequence ID" value="NC_008570.1"/>
</dbReference>
<dbReference type="RefSeq" id="YP_856342.1">
    <property type="nucleotide sequence ID" value="NC_008570.1"/>
</dbReference>
<dbReference type="SMR" id="A0KJ91"/>
<dbReference type="STRING" id="380703.AHA_1807"/>
<dbReference type="EnsemblBacteria" id="ABK36951">
    <property type="protein sequence ID" value="ABK36951"/>
    <property type="gene ID" value="AHA_1807"/>
</dbReference>
<dbReference type="GeneID" id="4487840"/>
<dbReference type="KEGG" id="aha:AHA_1807"/>
<dbReference type="PATRIC" id="fig|380703.7.peg.1823"/>
<dbReference type="eggNOG" id="COG0807">
    <property type="taxonomic scope" value="Bacteria"/>
</dbReference>
<dbReference type="HOGENOM" id="CLU_020273_2_1_6"/>
<dbReference type="OrthoDB" id="9793111at2"/>
<dbReference type="UniPathway" id="UPA00275">
    <property type="reaction ID" value="UER00400"/>
</dbReference>
<dbReference type="Proteomes" id="UP000000756">
    <property type="component" value="Chromosome"/>
</dbReference>
<dbReference type="GO" id="GO:0005829">
    <property type="term" value="C:cytosol"/>
    <property type="evidence" value="ECO:0007669"/>
    <property type="project" value="TreeGrafter"/>
</dbReference>
<dbReference type="GO" id="GO:0005525">
    <property type="term" value="F:GTP binding"/>
    <property type="evidence" value="ECO:0007669"/>
    <property type="project" value="UniProtKB-KW"/>
</dbReference>
<dbReference type="GO" id="GO:0003935">
    <property type="term" value="F:GTP cyclohydrolase II activity"/>
    <property type="evidence" value="ECO:0007669"/>
    <property type="project" value="UniProtKB-UniRule"/>
</dbReference>
<dbReference type="GO" id="GO:0008270">
    <property type="term" value="F:zinc ion binding"/>
    <property type="evidence" value="ECO:0007669"/>
    <property type="project" value="UniProtKB-UniRule"/>
</dbReference>
<dbReference type="GO" id="GO:0009231">
    <property type="term" value="P:riboflavin biosynthetic process"/>
    <property type="evidence" value="ECO:0007669"/>
    <property type="project" value="UniProtKB-UniRule"/>
</dbReference>
<dbReference type="CDD" id="cd00641">
    <property type="entry name" value="GTP_cyclohydro2"/>
    <property type="match status" value="1"/>
</dbReference>
<dbReference type="FunFam" id="3.40.50.10990:FF:000002">
    <property type="entry name" value="GTP cyclohydrolase-2"/>
    <property type="match status" value="1"/>
</dbReference>
<dbReference type="Gene3D" id="3.40.50.10990">
    <property type="entry name" value="GTP cyclohydrolase II"/>
    <property type="match status" value="1"/>
</dbReference>
<dbReference type="HAMAP" id="MF_00179">
    <property type="entry name" value="RibA"/>
    <property type="match status" value="1"/>
</dbReference>
<dbReference type="InterPro" id="IPR032677">
    <property type="entry name" value="GTP_cyclohydro_II"/>
</dbReference>
<dbReference type="InterPro" id="IPR000926">
    <property type="entry name" value="RibA"/>
</dbReference>
<dbReference type="InterPro" id="IPR036144">
    <property type="entry name" value="RibA-like_sf"/>
</dbReference>
<dbReference type="NCBIfam" id="NF001591">
    <property type="entry name" value="PRK00393.1"/>
    <property type="match status" value="1"/>
</dbReference>
<dbReference type="NCBIfam" id="TIGR00505">
    <property type="entry name" value="ribA"/>
    <property type="match status" value="1"/>
</dbReference>
<dbReference type="PANTHER" id="PTHR21327:SF18">
    <property type="entry name" value="3,4-DIHYDROXY-2-BUTANONE 4-PHOSPHATE SYNTHASE"/>
    <property type="match status" value="1"/>
</dbReference>
<dbReference type="PANTHER" id="PTHR21327">
    <property type="entry name" value="GTP CYCLOHYDROLASE II-RELATED"/>
    <property type="match status" value="1"/>
</dbReference>
<dbReference type="Pfam" id="PF00925">
    <property type="entry name" value="GTP_cyclohydro2"/>
    <property type="match status" value="1"/>
</dbReference>
<dbReference type="SUPFAM" id="SSF142695">
    <property type="entry name" value="RibA-like"/>
    <property type="match status" value="1"/>
</dbReference>
<sequence>MSSVTLVAKSKLPTPWGTFTLVGFQETGTGKDHAALVMGDITGDEPVLGRIHSECLTGDALFSLRCDCGFQLQAALENIAKAGRGVLLYVRQEGRGIGLLNKIRAYHLQDQGADTVEANVALGFAADMRDYTICADMLKQLEVKSLKLMTNNPRKMKAMESFGIPVAERVPLQEGRNPHNEFYLSTKANKLDHMFKK</sequence>
<accession>A0KJ91</accession>
<name>RIBA_AERHH</name>
<gene>
    <name evidence="1" type="primary">ribA</name>
    <name type="ordered locus">AHA_1807</name>
</gene>
<feature type="chain" id="PRO_1000203810" description="GTP cyclohydrolase-2">
    <location>
        <begin position="1"/>
        <end position="197"/>
    </location>
</feature>
<feature type="active site" description="Proton acceptor" evidence="1">
    <location>
        <position position="127"/>
    </location>
</feature>
<feature type="active site" description="Nucleophile" evidence="1">
    <location>
        <position position="129"/>
    </location>
</feature>
<feature type="binding site" evidence="1">
    <location>
        <begin position="50"/>
        <end position="54"/>
    </location>
    <ligand>
        <name>GTP</name>
        <dbReference type="ChEBI" id="CHEBI:37565"/>
    </ligand>
</feature>
<feature type="binding site" evidence="1">
    <location>
        <position position="55"/>
    </location>
    <ligand>
        <name>Zn(2+)</name>
        <dbReference type="ChEBI" id="CHEBI:29105"/>
        <note>catalytic</note>
    </ligand>
</feature>
<feature type="binding site" evidence="1">
    <location>
        <position position="66"/>
    </location>
    <ligand>
        <name>Zn(2+)</name>
        <dbReference type="ChEBI" id="CHEBI:29105"/>
        <note>catalytic</note>
    </ligand>
</feature>
<feature type="binding site" evidence="1">
    <location>
        <position position="68"/>
    </location>
    <ligand>
        <name>Zn(2+)</name>
        <dbReference type="ChEBI" id="CHEBI:29105"/>
        <note>catalytic</note>
    </ligand>
</feature>
<feature type="binding site" evidence="1">
    <location>
        <position position="71"/>
    </location>
    <ligand>
        <name>GTP</name>
        <dbReference type="ChEBI" id="CHEBI:37565"/>
    </ligand>
</feature>
<feature type="binding site" evidence="1">
    <location>
        <begin position="93"/>
        <end position="95"/>
    </location>
    <ligand>
        <name>GTP</name>
        <dbReference type="ChEBI" id="CHEBI:37565"/>
    </ligand>
</feature>
<feature type="binding site" evidence="1">
    <location>
        <position position="115"/>
    </location>
    <ligand>
        <name>GTP</name>
        <dbReference type="ChEBI" id="CHEBI:37565"/>
    </ligand>
</feature>
<feature type="binding site" evidence="1">
    <location>
        <position position="150"/>
    </location>
    <ligand>
        <name>GTP</name>
        <dbReference type="ChEBI" id="CHEBI:37565"/>
    </ligand>
</feature>
<feature type="binding site" evidence="1">
    <location>
        <position position="155"/>
    </location>
    <ligand>
        <name>GTP</name>
        <dbReference type="ChEBI" id="CHEBI:37565"/>
    </ligand>
</feature>
<comment type="function">
    <text evidence="1">Catalyzes the conversion of GTP to 2,5-diamino-6-ribosylamino-4(3H)-pyrimidinone 5'-phosphate (DARP), formate and pyrophosphate.</text>
</comment>
<comment type="catalytic activity">
    <reaction evidence="1">
        <text>GTP + 4 H2O = 2,5-diamino-6-hydroxy-4-(5-phosphoribosylamino)-pyrimidine + formate + 2 phosphate + 3 H(+)</text>
        <dbReference type="Rhea" id="RHEA:23704"/>
        <dbReference type="ChEBI" id="CHEBI:15377"/>
        <dbReference type="ChEBI" id="CHEBI:15378"/>
        <dbReference type="ChEBI" id="CHEBI:15740"/>
        <dbReference type="ChEBI" id="CHEBI:37565"/>
        <dbReference type="ChEBI" id="CHEBI:43474"/>
        <dbReference type="ChEBI" id="CHEBI:58614"/>
        <dbReference type="EC" id="3.5.4.25"/>
    </reaction>
</comment>
<comment type="cofactor">
    <cofactor evidence="1">
        <name>Zn(2+)</name>
        <dbReference type="ChEBI" id="CHEBI:29105"/>
    </cofactor>
    <text evidence="1">Binds 1 zinc ion per subunit.</text>
</comment>
<comment type="pathway">
    <text evidence="1">Cofactor biosynthesis; riboflavin biosynthesis; 5-amino-6-(D-ribitylamino)uracil from GTP: step 1/4.</text>
</comment>
<comment type="similarity">
    <text evidence="1">Belongs to the GTP cyclohydrolase II family.</text>
</comment>